<accession>Q9GBZ7</accession>
<reference key="1">
    <citation type="journal article" date="2000" name="Mol. Phylogenet. Evol.">
        <title>Molecular systematics of pikas (genus Ochotona) inferred from mitochondrial DNA sequences.</title>
        <authorList>
            <person name="Yu N."/>
            <person name="Zheng C."/>
            <person name="Zhang Y.P."/>
            <person name="Li W.H."/>
        </authorList>
    </citation>
    <scope>NUCLEOTIDE SEQUENCE [GENOMIC DNA]</scope>
</reference>
<comment type="function">
    <text evidence="2">Component of the ubiquinol-cytochrome c reductase complex (complex III or cytochrome b-c1 complex) that is part of the mitochondrial respiratory chain. The b-c1 complex mediates electron transfer from ubiquinol to cytochrome c. Contributes to the generation of a proton gradient across the mitochondrial membrane that is then used for ATP synthesis.</text>
</comment>
<comment type="cofactor">
    <cofactor evidence="2">
        <name>heme b</name>
        <dbReference type="ChEBI" id="CHEBI:60344"/>
    </cofactor>
    <text evidence="2">Binds 2 heme b groups non-covalently.</text>
</comment>
<comment type="subunit">
    <text evidence="2">The cytochrome bc1 complex contains 11 subunits: 3 respiratory subunits (MT-CYB, CYC1 and UQCRFS1), 2 core proteins (UQCRC1 and UQCRC2) and 6 low-molecular weight proteins (UQCRH/QCR6, UQCRB/QCR7, UQCRQ/QCR8, UQCR10/QCR9, UQCR11/QCR10 and a cleavage product of UQCRFS1). This cytochrome bc1 complex then forms a dimer.</text>
</comment>
<comment type="subcellular location">
    <subcellularLocation>
        <location evidence="2">Mitochondrion inner membrane</location>
        <topology evidence="2">Multi-pass membrane protein</topology>
    </subcellularLocation>
</comment>
<comment type="miscellaneous">
    <text evidence="1">Heme 1 (or BL or b562) is low-potential and absorbs at about 562 nm, and heme 2 (or BH or b566) is high-potential and absorbs at about 566 nm.</text>
</comment>
<comment type="similarity">
    <text evidence="3 4">Belongs to the cytochrome b family.</text>
</comment>
<comment type="caution">
    <text evidence="2">The full-length protein contains only eight transmembrane helices, not nine as predicted by bioinformatics tools.</text>
</comment>
<evidence type="ECO:0000250" key="1"/>
<evidence type="ECO:0000250" key="2">
    <source>
        <dbReference type="UniProtKB" id="P00157"/>
    </source>
</evidence>
<evidence type="ECO:0000255" key="3">
    <source>
        <dbReference type="PROSITE-ProRule" id="PRU00967"/>
    </source>
</evidence>
<evidence type="ECO:0000255" key="4">
    <source>
        <dbReference type="PROSITE-ProRule" id="PRU00968"/>
    </source>
</evidence>
<gene>
    <name type="primary">MT-CYB</name>
    <name type="synonym">COB</name>
    <name type="synonym">CYTB</name>
    <name type="synonym">MTCYB</name>
</gene>
<dbReference type="EMBL" id="AF272986">
    <property type="protein sequence ID" value="AAG00181.1"/>
    <property type="molecule type" value="Genomic_DNA"/>
</dbReference>
<dbReference type="SMR" id="Q9GBZ7"/>
<dbReference type="GO" id="GO:0005743">
    <property type="term" value="C:mitochondrial inner membrane"/>
    <property type="evidence" value="ECO:0007669"/>
    <property type="project" value="UniProtKB-SubCell"/>
</dbReference>
<dbReference type="GO" id="GO:0045275">
    <property type="term" value="C:respiratory chain complex III"/>
    <property type="evidence" value="ECO:0007669"/>
    <property type="project" value="InterPro"/>
</dbReference>
<dbReference type="GO" id="GO:0046872">
    <property type="term" value="F:metal ion binding"/>
    <property type="evidence" value="ECO:0007669"/>
    <property type="project" value="UniProtKB-KW"/>
</dbReference>
<dbReference type="GO" id="GO:0008121">
    <property type="term" value="F:ubiquinol-cytochrome-c reductase activity"/>
    <property type="evidence" value="ECO:0007669"/>
    <property type="project" value="InterPro"/>
</dbReference>
<dbReference type="GO" id="GO:0006122">
    <property type="term" value="P:mitochondrial electron transport, ubiquinol to cytochrome c"/>
    <property type="evidence" value="ECO:0007669"/>
    <property type="project" value="TreeGrafter"/>
</dbReference>
<dbReference type="CDD" id="cd00290">
    <property type="entry name" value="cytochrome_b_C"/>
    <property type="match status" value="1"/>
</dbReference>
<dbReference type="CDD" id="cd00284">
    <property type="entry name" value="Cytochrome_b_N"/>
    <property type="match status" value="1"/>
</dbReference>
<dbReference type="FunFam" id="1.20.810.10:FF:000002">
    <property type="entry name" value="Cytochrome b"/>
    <property type="match status" value="1"/>
</dbReference>
<dbReference type="Gene3D" id="1.20.810.10">
    <property type="entry name" value="Cytochrome Bc1 Complex, Chain C"/>
    <property type="match status" value="1"/>
</dbReference>
<dbReference type="InterPro" id="IPR005798">
    <property type="entry name" value="Cyt_b/b6_C"/>
</dbReference>
<dbReference type="InterPro" id="IPR036150">
    <property type="entry name" value="Cyt_b/b6_C_sf"/>
</dbReference>
<dbReference type="InterPro" id="IPR005797">
    <property type="entry name" value="Cyt_b/b6_N"/>
</dbReference>
<dbReference type="InterPro" id="IPR027387">
    <property type="entry name" value="Cytb/b6-like_sf"/>
</dbReference>
<dbReference type="InterPro" id="IPR030689">
    <property type="entry name" value="Cytochrome_b"/>
</dbReference>
<dbReference type="InterPro" id="IPR048260">
    <property type="entry name" value="Cytochrome_b_C_euk/bac"/>
</dbReference>
<dbReference type="InterPro" id="IPR048259">
    <property type="entry name" value="Cytochrome_b_N_euk/bac"/>
</dbReference>
<dbReference type="InterPro" id="IPR016174">
    <property type="entry name" value="Di-haem_cyt_TM"/>
</dbReference>
<dbReference type="PANTHER" id="PTHR19271">
    <property type="entry name" value="CYTOCHROME B"/>
    <property type="match status" value="1"/>
</dbReference>
<dbReference type="PANTHER" id="PTHR19271:SF16">
    <property type="entry name" value="CYTOCHROME B"/>
    <property type="match status" value="1"/>
</dbReference>
<dbReference type="Pfam" id="PF00032">
    <property type="entry name" value="Cytochrom_B_C"/>
    <property type="match status" value="1"/>
</dbReference>
<dbReference type="Pfam" id="PF00033">
    <property type="entry name" value="Cytochrome_B"/>
    <property type="match status" value="1"/>
</dbReference>
<dbReference type="PIRSF" id="PIRSF038885">
    <property type="entry name" value="COB"/>
    <property type="match status" value="1"/>
</dbReference>
<dbReference type="SUPFAM" id="SSF81648">
    <property type="entry name" value="a domain/subunit of cytochrome bc1 complex (Ubiquinol-cytochrome c reductase)"/>
    <property type="match status" value="1"/>
</dbReference>
<dbReference type="SUPFAM" id="SSF81342">
    <property type="entry name" value="Transmembrane di-heme cytochromes"/>
    <property type="match status" value="1"/>
</dbReference>
<dbReference type="PROSITE" id="PS51003">
    <property type="entry name" value="CYTB_CTER"/>
    <property type="match status" value="1"/>
</dbReference>
<dbReference type="PROSITE" id="PS51002">
    <property type="entry name" value="CYTB_NTER"/>
    <property type="match status" value="1"/>
</dbReference>
<name>CYB_OCHTI</name>
<sequence>MTNIRKSHPLMKIVNHSLIDLPAPSNISAWWNFGSLLGLCLGIQIITGLFLAMHYTSDTLTAFSSVTHICRDVNYGWIIRYLHANGASMFFICLFLHVGRGIYYGSYTYSETWNIGILLLFAVMATAFMGYVLPWGQMSFWGATVITNLLSAIPYIGTDLVQWIWGGFSVDKATLTRFFAFHFILPFIIAALVMVHLLFLHETGSNNPTGIISDADKIPFHPYYTIKDALGFLFLITLLLTLVLFSPDLLGDPDNYTPANPLNTPPHIKPEWYFLFAYAILRSIPNKLGGVLALVLSIAILAVMPLLHTSKQRSMMFRPISQCLFWVLVADLLTLTWIGGQPVEHPFIIIGQLASFIYFFLILILMPTCSLIENKLLKW</sequence>
<feature type="chain" id="PRO_0000061310" description="Cytochrome b">
    <location>
        <begin position="1"/>
        <end position="379"/>
    </location>
</feature>
<feature type="transmembrane region" description="Helical" evidence="2">
    <location>
        <begin position="33"/>
        <end position="53"/>
    </location>
</feature>
<feature type="transmembrane region" description="Helical" evidence="2">
    <location>
        <begin position="77"/>
        <end position="98"/>
    </location>
</feature>
<feature type="transmembrane region" description="Helical" evidence="2">
    <location>
        <begin position="113"/>
        <end position="133"/>
    </location>
</feature>
<feature type="transmembrane region" description="Helical" evidence="2">
    <location>
        <begin position="178"/>
        <end position="198"/>
    </location>
</feature>
<feature type="transmembrane region" description="Helical" evidence="2">
    <location>
        <begin position="226"/>
        <end position="246"/>
    </location>
</feature>
<feature type="transmembrane region" description="Helical" evidence="2">
    <location>
        <begin position="288"/>
        <end position="308"/>
    </location>
</feature>
<feature type="transmembrane region" description="Helical" evidence="2">
    <location>
        <begin position="320"/>
        <end position="340"/>
    </location>
</feature>
<feature type="transmembrane region" description="Helical" evidence="2">
    <location>
        <begin position="347"/>
        <end position="367"/>
    </location>
</feature>
<feature type="binding site" description="axial binding residue" evidence="2">
    <location>
        <position position="83"/>
    </location>
    <ligand>
        <name>heme b</name>
        <dbReference type="ChEBI" id="CHEBI:60344"/>
        <label>b562</label>
    </ligand>
    <ligandPart>
        <name>Fe</name>
        <dbReference type="ChEBI" id="CHEBI:18248"/>
    </ligandPart>
</feature>
<feature type="binding site" description="axial binding residue" evidence="2">
    <location>
        <position position="97"/>
    </location>
    <ligand>
        <name>heme b</name>
        <dbReference type="ChEBI" id="CHEBI:60344"/>
        <label>b566</label>
    </ligand>
    <ligandPart>
        <name>Fe</name>
        <dbReference type="ChEBI" id="CHEBI:18248"/>
    </ligandPart>
</feature>
<feature type="binding site" description="axial binding residue" evidence="2">
    <location>
        <position position="182"/>
    </location>
    <ligand>
        <name>heme b</name>
        <dbReference type="ChEBI" id="CHEBI:60344"/>
        <label>b562</label>
    </ligand>
    <ligandPart>
        <name>Fe</name>
        <dbReference type="ChEBI" id="CHEBI:18248"/>
    </ligandPart>
</feature>
<feature type="binding site" description="axial binding residue" evidence="2">
    <location>
        <position position="196"/>
    </location>
    <ligand>
        <name>heme b</name>
        <dbReference type="ChEBI" id="CHEBI:60344"/>
        <label>b566</label>
    </ligand>
    <ligandPart>
        <name>Fe</name>
        <dbReference type="ChEBI" id="CHEBI:18248"/>
    </ligandPart>
</feature>
<feature type="binding site" evidence="2">
    <location>
        <position position="201"/>
    </location>
    <ligand>
        <name>a ubiquinone</name>
        <dbReference type="ChEBI" id="CHEBI:16389"/>
    </ligand>
</feature>
<proteinExistence type="inferred from homology"/>
<keyword id="KW-0249">Electron transport</keyword>
<keyword id="KW-0349">Heme</keyword>
<keyword id="KW-0408">Iron</keyword>
<keyword id="KW-0472">Membrane</keyword>
<keyword id="KW-0479">Metal-binding</keyword>
<keyword id="KW-0496">Mitochondrion</keyword>
<keyword id="KW-0999">Mitochondrion inner membrane</keyword>
<keyword id="KW-0679">Respiratory chain</keyword>
<keyword id="KW-0812">Transmembrane</keyword>
<keyword id="KW-1133">Transmembrane helix</keyword>
<keyword id="KW-0813">Transport</keyword>
<keyword id="KW-0830">Ubiquinone</keyword>
<protein>
    <recommendedName>
        <fullName>Cytochrome b</fullName>
    </recommendedName>
    <alternativeName>
        <fullName>Complex III subunit 3</fullName>
    </alternativeName>
    <alternativeName>
        <fullName>Complex III subunit III</fullName>
    </alternativeName>
    <alternativeName>
        <fullName>Cytochrome b-c1 complex subunit 3</fullName>
    </alternativeName>
    <alternativeName>
        <fullName>Ubiquinol-cytochrome-c reductase complex cytochrome b subunit</fullName>
    </alternativeName>
</protein>
<geneLocation type="mitochondrion"/>
<organism>
    <name type="scientific">Ochotona thibetana</name>
    <name type="common">Moupin pika</name>
    <dbReference type="NCBI Taxonomy" id="130843"/>
    <lineage>
        <taxon>Eukaryota</taxon>
        <taxon>Metazoa</taxon>
        <taxon>Chordata</taxon>
        <taxon>Craniata</taxon>
        <taxon>Vertebrata</taxon>
        <taxon>Euteleostomi</taxon>
        <taxon>Mammalia</taxon>
        <taxon>Eutheria</taxon>
        <taxon>Euarchontoglires</taxon>
        <taxon>Glires</taxon>
        <taxon>Lagomorpha</taxon>
        <taxon>Ochotonidae</taxon>
        <taxon>Ochotona</taxon>
    </lineage>
</organism>